<comment type="similarity">
    <text evidence="2">Belongs to the FHIP family.</text>
</comment>
<name>U518_NEMVE</name>
<keyword id="KW-1185">Reference proteome</keyword>
<gene>
    <name type="ORF">v1g243165</name>
</gene>
<protein>
    <recommendedName>
        <fullName>FHIP family protein v1g243165</fullName>
    </recommendedName>
</protein>
<dbReference type="EMBL" id="DS469586">
    <property type="protein sequence ID" value="EDO40782.1"/>
    <property type="molecule type" value="Genomic_DNA"/>
</dbReference>
<dbReference type="RefSeq" id="XP_001632845.1">
    <property type="nucleotide sequence ID" value="XM_001632795.1"/>
</dbReference>
<dbReference type="SMR" id="A7S6A1"/>
<dbReference type="STRING" id="45351.A7S6A1"/>
<dbReference type="EnsemblMetazoa" id="EDO40782">
    <property type="protein sequence ID" value="EDO40782"/>
    <property type="gene ID" value="NEMVEDRAFT_v1g243165"/>
</dbReference>
<dbReference type="KEGG" id="nve:5512519"/>
<dbReference type="eggNOG" id="KOG3695">
    <property type="taxonomic scope" value="Eukaryota"/>
</dbReference>
<dbReference type="HOGENOM" id="CLU_007807_0_0_1"/>
<dbReference type="InParanoid" id="A7S6A1"/>
<dbReference type="OMA" id="WHKINAD"/>
<dbReference type="OrthoDB" id="6287422at2759"/>
<dbReference type="PhylomeDB" id="A7S6A1"/>
<dbReference type="Proteomes" id="UP000001593">
    <property type="component" value="Unassembled WGS sequence"/>
</dbReference>
<dbReference type="InterPro" id="IPR019384">
    <property type="entry name" value="FHIP"/>
</dbReference>
<dbReference type="InterPro" id="IPR045669">
    <property type="entry name" value="FHIP_C"/>
</dbReference>
<dbReference type="InterPro" id="IPR045668">
    <property type="entry name" value="FHIP_KELAA_motif"/>
</dbReference>
<dbReference type="PANTHER" id="PTHR21705:SF11">
    <property type="entry name" value="FHIP FAMILY PROTEIN CG3558"/>
    <property type="match status" value="1"/>
</dbReference>
<dbReference type="PANTHER" id="PTHR21705">
    <property type="entry name" value="RAI16 PROTEIN-RELATED"/>
    <property type="match status" value="1"/>
</dbReference>
<dbReference type="Pfam" id="PF19314">
    <property type="entry name" value="DUF5917"/>
    <property type="match status" value="1"/>
</dbReference>
<dbReference type="Pfam" id="PF19311">
    <property type="entry name" value="KELAA"/>
    <property type="match status" value="1"/>
</dbReference>
<dbReference type="Pfam" id="PF10257">
    <property type="entry name" value="RAI16-like"/>
    <property type="match status" value="1"/>
</dbReference>
<proteinExistence type="inferred from homology"/>
<reference key="1">
    <citation type="journal article" date="2007" name="Science">
        <title>Sea anemone genome reveals ancestral eumetazoan gene repertoire and genomic organization.</title>
        <authorList>
            <person name="Putnam N.H."/>
            <person name="Srivastava M."/>
            <person name="Hellsten U."/>
            <person name="Dirks B."/>
            <person name="Chapman J."/>
            <person name="Salamov A."/>
            <person name="Terry A."/>
            <person name="Shapiro H."/>
            <person name="Lindquist E."/>
            <person name="Kapitonov V.V."/>
            <person name="Jurka J."/>
            <person name="Genikhovich G."/>
            <person name="Grigoriev I.V."/>
            <person name="Lucas S.M."/>
            <person name="Steele R.E."/>
            <person name="Finnerty J.R."/>
            <person name="Technau U."/>
            <person name="Martindale M.Q."/>
            <person name="Rokhsar D.S."/>
        </authorList>
    </citation>
    <scope>NUCLEOTIDE SEQUENCE [LARGE SCALE GENOMIC DNA]</scope>
    <source>
        <strain>CH2 X CH6</strain>
    </source>
</reference>
<sequence length="866" mass="96245">MSLLKKLASLAPAHPSHGDVERREIAAPTLVGNAEYLKLVDVHWNSSQQIMGLDSKTVGPQERCKILMYHLNEIVSVLAEEKEECPGPCLKYVLDENIFEIVFMWGTSSYVNELMKREQIKVFRNLIERSKAPILIYEQVWKPLLCLLHSCASTKLPSDMEEDYVAVLKGLCVSANRDIVLLDLFFLENHNHSEISGFSVFSLLIPYVHREGDLGVWARDAMLLSMALSSIDARLGSYIVEETNFCPILAIGLSGLFSDLPTSLDIPSEDWYSLERGLWATFPELVAFLTSLEFCNNVIQIAHHKVQHMLLELIYHGFLVSVMSSALTQSSVEALTAVTAYLDLFVRSITDSKLMQVFVKFLLVEKSDGVPILDSLVARIGQESQLAVVSLGLIHTLLDLNCEDILYTLVLKYLIPCTHILSSQRRTVREVDYYSKSAAKFLSLIPSCCHGLSTCLASSRPESPSCLSSTESLNKSIEVKIDMKTSHDFVKYRPQPHVHGGEATLADYLEYLADARQAIRNCQLRCSCWSMQYDGTDLSSTDDATENNPANKRRSLVLANGSIPRSASEVSSTLAVKASDKTKRSLSSNDLCLPSAEEGLGPFLSTLFRKLENMAQNTFYVNLILTAVITRLCYYPQPLLKSFLLNYNIVLKPGVRSLFQILSSIKIKVENVVESVEGLHKLLRRARNNLILREEKSKASIQSVVADVPIPTRESIASPTTQKRLARQKTDTFLAVRIRDGPPPSLMRAHSIGSIGSASTSSSLSLTDSIESLGNLSPQFGSTADISEDASPVSQAPETTGRPRASAVVRESQTQLKRNTFRRKNPKAVKNAVYCIVMLEEWLKELAAISQEHALLPLVPQEMQDV</sequence>
<accession>A7S6A1</accession>
<organism>
    <name type="scientific">Nematostella vectensis</name>
    <name type="common">Starlet sea anemone</name>
    <dbReference type="NCBI Taxonomy" id="45351"/>
    <lineage>
        <taxon>Eukaryota</taxon>
        <taxon>Metazoa</taxon>
        <taxon>Cnidaria</taxon>
        <taxon>Anthozoa</taxon>
        <taxon>Hexacorallia</taxon>
        <taxon>Actiniaria</taxon>
        <taxon>Edwardsiidae</taxon>
        <taxon>Nematostella</taxon>
    </lineage>
</organism>
<feature type="chain" id="PRO_0000379016" description="FHIP family protein v1g243165">
    <location>
        <begin position="1"/>
        <end position="866"/>
    </location>
</feature>
<feature type="region of interest" description="Disordered" evidence="1">
    <location>
        <begin position="739"/>
        <end position="761"/>
    </location>
</feature>
<feature type="region of interest" description="Disordered" evidence="1">
    <location>
        <begin position="781"/>
        <end position="814"/>
    </location>
</feature>
<feature type="compositionally biased region" description="Low complexity" evidence="1">
    <location>
        <begin position="751"/>
        <end position="761"/>
    </location>
</feature>
<evidence type="ECO:0000256" key="1">
    <source>
        <dbReference type="SAM" id="MobiDB-lite"/>
    </source>
</evidence>
<evidence type="ECO:0000305" key="2"/>